<dbReference type="EMBL" id="DQ673255">
    <property type="protein sequence ID" value="ABG74615.1"/>
    <property type="molecule type" value="Genomic_DNA"/>
</dbReference>
<dbReference type="RefSeq" id="YP_778477.1">
    <property type="nucleotide sequence ID" value="NC_008407.1"/>
</dbReference>
<dbReference type="SMR" id="Q06RE4"/>
<dbReference type="GeneID" id="4319739"/>
<dbReference type="GO" id="GO:0009535">
    <property type="term" value="C:chloroplast thylakoid membrane"/>
    <property type="evidence" value="ECO:0007669"/>
    <property type="project" value="UniProtKB-SubCell"/>
</dbReference>
<dbReference type="GO" id="GO:0045259">
    <property type="term" value="C:proton-transporting ATP synthase complex"/>
    <property type="evidence" value="ECO:0007669"/>
    <property type="project" value="UniProtKB-KW"/>
</dbReference>
<dbReference type="GO" id="GO:0033177">
    <property type="term" value="C:proton-transporting two-sector ATPase complex, proton-transporting domain"/>
    <property type="evidence" value="ECO:0007669"/>
    <property type="project" value="InterPro"/>
</dbReference>
<dbReference type="GO" id="GO:0008289">
    <property type="term" value="F:lipid binding"/>
    <property type="evidence" value="ECO:0007669"/>
    <property type="project" value="UniProtKB-KW"/>
</dbReference>
<dbReference type="GO" id="GO:0046933">
    <property type="term" value="F:proton-transporting ATP synthase activity, rotational mechanism"/>
    <property type="evidence" value="ECO:0007669"/>
    <property type="project" value="UniProtKB-UniRule"/>
</dbReference>
<dbReference type="CDD" id="cd18183">
    <property type="entry name" value="ATP-synt_Fo_c_ATPH"/>
    <property type="match status" value="1"/>
</dbReference>
<dbReference type="FunFam" id="1.20.20.10:FF:000001">
    <property type="entry name" value="ATP synthase subunit c, chloroplastic"/>
    <property type="match status" value="1"/>
</dbReference>
<dbReference type="Gene3D" id="1.20.20.10">
    <property type="entry name" value="F1F0 ATP synthase subunit C"/>
    <property type="match status" value="1"/>
</dbReference>
<dbReference type="HAMAP" id="MF_01396">
    <property type="entry name" value="ATP_synth_c_bact"/>
    <property type="match status" value="1"/>
</dbReference>
<dbReference type="InterPro" id="IPR005953">
    <property type="entry name" value="ATP_synth_csu_bac/chlpt"/>
</dbReference>
<dbReference type="InterPro" id="IPR000454">
    <property type="entry name" value="ATP_synth_F0_csu"/>
</dbReference>
<dbReference type="InterPro" id="IPR020537">
    <property type="entry name" value="ATP_synth_F0_csu_DDCD_BS"/>
</dbReference>
<dbReference type="InterPro" id="IPR038662">
    <property type="entry name" value="ATP_synth_F0_csu_sf"/>
</dbReference>
<dbReference type="InterPro" id="IPR002379">
    <property type="entry name" value="ATPase_proteolipid_c-like_dom"/>
</dbReference>
<dbReference type="InterPro" id="IPR035921">
    <property type="entry name" value="F/V-ATP_Csub_sf"/>
</dbReference>
<dbReference type="NCBIfam" id="TIGR01260">
    <property type="entry name" value="ATP_synt_c"/>
    <property type="match status" value="1"/>
</dbReference>
<dbReference type="NCBIfam" id="NF005608">
    <property type="entry name" value="PRK07354.1"/>
    <property type="match status" value="1"/>
</dbReference>
<dbReference type="PANTHER" id="PTHR10031">
    <property type="entry name" value="ATP SYNTHASE LIPID-BINDING PROTEIN, MITOCHONDRIAL"/>
    <property type="match status" value="1"/>
</dbReference>
<dbReference type="PANTHER" id="PTHR10031:SF0">
    <property type="entry name" value="ATPASE PROTEIN 9"/>
    <property type="match status" value="1"/>
</dbReference>
<dbReference type="Pfam" id="PF00137">
    <property type="entry name" value="ATP-synt_C"/>
    <property type="match status" value="1"/>
</dbReference>
<dbReference type="PRINTS" id="PR00124">
    <property type="entry name" value="ATPASEC"/>
</dbReference>
<dbReference type="SUPFAM" id="SSF81333">
    <property type="entry name" value="F1F0 ATP synthase subunit C"/>
    <property type="match status" value="1"/>
</dbReference>
<dbReference type="PROSITE" id="PS00605">
    <property type="entry name" value="ATPASE_C"/>
    <property type="match status" value="1"/>
</dbReference>
<evidence type="ECO:0000255" key="1">
    <source>
        <dbReference type="HAMAP-Rule" id="MF_01396"/>
    </source>
</evidence>
<protein>
    <recommendedName>
        <fullName evidence="1">ATP synthase subunit c, chloroplastic</fullName>
    </recommendedName>
    <alternativeName>
        <fullName evidence="1">ATP synthase F(0) sector subunit c</fullName>
    </alternativeName>
    <alternativeName>
        <fullName evidence="1">ATPase subunit III</fullName>
    </alternativeName>
    <alternativeName>
        <fullName evidence="1">F-type ATPase subunit c</fullName>
        <shortName evidence="1">F-ATPase subunit c</shortName>
    </alternativeName>
    <alternativeName>
        <fullName evidence="1">Lipid-binding protein</fullName>
    </alternativeName>
</protein>
<organism>
    <name type="scientific">Jasminum nudiflorum</name>
    <name type="common">Winter jasmine</name>
    <dbReference type="NCBI Taxonomy" id="126431"/>
    <lineage>
        <taxon>Eukaryota</taxon>
        <taxon>Viridiplantae</taxon>
        <taxon>Streptophyta</taxon>
        <taxon>Embryophyta</taxon>
        <taxon>Tracheophyta</taxon>
        <taxon>Spermatophyta</taxon>
        <taxon>Magnoliopsida</taxon>
        <taxon>eudicotyledons</taxon>
        <taxon>Gunneridae</taxon>
        <taxon>Pentapetalae</taxon>
        <taxon>asterids</taxon>
        <taxon>lamiids</taxon>
        <taxon>Lamiales</taxon>
        <taxon>Oleaceae</taxon>
        <taxon>Jasmineae</taxon>
        <taxon>Jasminum</taxon>
    </lineage>
</organism>
<sequence>MNPLISAASVIAAGLAVGLASIGPGVGQGTAAGQAVEGIARQPEAEGKIRGTLLLSLAFMEALTIYGLVVALALLFANPFV</sequence>
<accession>Q06RE4</accession>
<comment type="function">
    <text evidence="1">F(1)F(0) ATP synthase produces ATP from ADP in the presence of a proton or sodium gradient. F-type ATPases consist of two structural domains, F(1) containing the extramembraneous catalytic core and F(0) containing the membrane proton channel, linked together by a central stalk and a peripheral stalk. During catalysis, ATP synthesis in the catalytic domain of F(1) is coupled via a rotary mechanism of the central stalk subunits to proton translocation.</text>
</comment>
<comment type="function">
    <text evidence="1">Key component of the F(0) channel; it plays a direct role in translocation across the membrane. A homomeric c-ring of between 10-14 subunits forms the central stalk rotor element with the F(1) delta and epsilon subunits.</text>
</comment>
<comment type="subunit">
    <text evidence="1">F-type ATPases have 2 components, F(1) - the catalytic core - and F(0) - the membrane proton channel. F(1) has five subunits: alpha(3), beta(3), gamma(1), delta(1), epsilon(1). F(0) has four main subunits: a(1), b(1), b'(1) and c(10-14). The alpha and beta chains form an alternating ring which encloses part of the gamma chain. F(1) is attached to F(0) by a central stalk formed by the gamma and epsilon chains, while a peripheral stalk is formed by the delta, b and b' chains.</text>
</comment>
<comment type="subcellular location">
    <subcellularLocation>
        <location evidence="1">Plastid</location>
        <location evidence="1">Chloroplast thylakoid membrane</location>
        <topology evidence="1">Multi-pass membrane protein</topology>
    </subcellularLocation>
</comment>
<comment type="miscellaneous">
    <text>In plastids the F-type ATPase is also known as CF(1)CF(0).</text>
</comment>
<comment type="similarity">
    <text evidence="1">Belongs to the ATPase C chain family.</text>
</comment>
<geneLocation type="chloroplast"/>
<proteinExistence type="inferred from homology"/>
<gene>
    <name evidence="1" type="primary">atpH</name>
    <name type="ORF">JNC0148</name>
</gene>
<feature type="chain" id="PRO_0000362926" description="ATP synthase subunit c, chloroplastic">
    <location>
        <begin position="1"/>
        <end position="81"/>
    </location>
</feature>
<feature type="transmembrane region" description="Helical" evidence="1">
    <location>
        <begin position="3"/>
        <end position="23"/>
    </location>
</feature>
<feature type="transmembrane region" description="Helical" evidence="1">
    <location>
        <begin position="57"/>
        <end position="77"/>
    </location>
</feature>
<feature type="site" description="Reversibly protonated during proton transport" evidence="1">
    <location>
        <position position="61"/>
    </location>
</feature>
<keyword id="KW-0066">ATP synthesis</keyword>
<keyword id="KW-0138">CF(0)</keyword>
<keyword id="KW-0150">Chloroplast</keyword>
<keyword id="KW-0375">Hydrogen ion transport</keyword>
<keyword id="KW-0406">Ion transport</keyword>
<keyword id="KW-0446">Lipid-binding</keyword>
<keyword id="KW-0472">Membrane</keyword>
<keyword id="KW-0934">Plastid</keyword>
<keyword id="KW-0793">Thylakoid</keyword>
<keyword id="KW-0812">Transmembrane</keyword>
<keyword id="KW-1133">Transmembrane helix</keyword>
<keyword id="KW-0813">Transport</keyword>
<reference key="1">
    <citation type="journal article" date="2007" name="Mol. Biol. Evol.">
        <title>Gene relocations within chloroplast genomes of Jasminum and Menodora (Oleaceae) are due to multiple, overlapping inversions.</title>
        <authorList>
            <person name="Lee H.-L."/>
            <person name="Jansen R.K."/>
            <person name="Chumley T.W."/>
            <person name="Kim K.-J."/>
        </authorList>
    </citation>
    <scope>NUCLEOTIDE SEQUENCE [LARGE SCALE GENOMIC DNA]</scope>
</reference>
<name>ATPH_JASNU</name>